<dbReference type="EMBL" id="CP000053">
    <property type="protein sequence ID" value="AAY61811.1"/>
    <property type="molecule type" value="Genomic_DNA"/>
</dbReference>
<dbReference type="SMR" id="Q4UKW2"/>
<dbReference type="STRING" id="315456.RF_0960"/>
<dbReference type="KEGG" id="rfe:RF_0960"/>
<dbReference type="eggNOG" id="COG1999">
    <property type="taxonomic scope" value="Bacteria"/>
</dbReference>
<dbReference type="HOGENOM" id="CLU_050131_3_1_5"/>
<dbReference type="OrthoDB" id="9790194at2"/>
<dbReference type="Proteomes" id="UP000008548">
    <property type="component" value="Chromosome"/>
</dbReference>
<dbReference type="GO" id="GO:0046872">
    <property type="term" value="F:metal ion binding"/>
    <property type="evidence" value="ECO:0007669"/>
    <property type="project" value="UniProtKB-KW"/>
</dbReference>
<dbReference type="CDD" id="cd02968">
    <property type="entry name" value="SCO"/>
    <property type="match status" value="1"/>
</dbReference>
<dbReference type="FunFam" id="3.40.30.10:FF:000013">
    <property type="entry name" value="Blast:Protein SCO1 homolog, mitochondrial"/>
    <property type="match status" value="1"/>
</dbReference>
<dbReference type="Gene3D" id="3.40.30.10">
    <property type="entry name" value="Glutaredoxin"/>
    <property type="match status" value="1"/>
</dbReference>
<dbReference type="InterPro" id="IPR003782">
    <property type="entry name" value="SCO1/SenC"/>
</dbReference>
<dbReference type="InterPro" id="IPR036249">
    <property type="entry name" value="Thioredoxin-like_sf"/>
</dbReference>
<dbReference type="PANTHER" id="PTHR12151">
    <property type="entry name" value="ELECTRON TRANSPORT PROTIN SCO1/SENC FAMILY MEMBER"/>
    <property type="match status" value="1"/>
</dbReference>
<dbReference type="PANTHER" id="PTHR12151:SF25">
    <property type="entry name" value="LINALOOL DEHYDRATASE_ISOMERASE DOMAIN-CONTAINING PROTEIN"/>
    <property type="match status" value="1"/>
</dbReference>
<dbReference type="Pfam" id="PF02630">
    <property type="entry name" value="SCO1-SenC"/>
    <property type="match status" value="1"/>
</dbReference>
<dbReference type="SUPFAM" id="SSF52833">
    <property type="entry name" value="Thioredoxin-like"/>
    <property type="match status" value="1"/>
</dbReference>
<comment type="similarity">
    <text evidence="2">Belongs to the SCO1/2 family.</text>
</comment>
<evidence type="ECO:0000250" key="1"/>
<evidence type="ECO:0000305" key="2"/>
<gene>
    <name type="ordered locus">RF_0960</name>
</gene>
<proteinExistence type="inferred from homology"/>
<accession>Q4UKW2</accession>
<name>SCO22_RICFE</name>
<protein>
    <recommendedName>
        <fullName>SCO2-like protein RF_0960</fullName>
    </recommendedName>
</protein>
<organism>
    <name type="scientific">Rickettsia felis (strain ATCC VR-1525 / URRWXCal2)</name>
    <name type="common">Rickettsia azadi</name>
    <dbReference type="NCBI Taxonomy" id="315456"/>
    <lineage>
        <taxon>Bacteria</taxon>
        <taxon>Pseudomonadati</taxon>
        <taxon>Pseudomonadota</taxon>
        <taxon>Alphaproteobacteria</taxon>
        <taxon>Rickettsiales</taxon>
        <taxon>Rickettsiaceae</taxon>
        <taxon>Rickettsieae</taxon>
        <taxon>Rickettsia</taxon>
        <taxon>spotted fever group</taxon>
    </lineage>
</organism>
<keyword id="KW-0186">Copper</keyword>
<keyword id="KW-0479">Metal-binding</keyword>
<reference key="1">
    <citation type="journal article" date="2005" name="PLoS Biol.">
        <title>The genome sequence of Rickettsia felis identifies the first putative conjugative plasmid in an obligate intracellular parasite.</title>
        <authorList>
            <person name="Ogata H."/>
            <person name="Renesto P."/>
            <person name="Audic S."/>
            <person name="Robert C."/>
            <person name="Blanc G."/>
            <person name="Fournier P.-E."/>
            <person name="Parinello H."/>
            <person name="Claverie J.-M."/>
            <person name="Raoult D."/>
        </authorList>
    </citation>
    <scope>NUCLEOTIDE SEQUENCE [LARGE SCALE GENOMIC DNA]</scope>
    <source>
        <strain>ATCC VR-1525 / URRWXCal2</strain>
    </source>
</reference>
<sequence length="205" mass="23308">MKMQSNVIKIIIVISLLIGVGALYLLLSLRTPEKPLAGQVNIYEDNVKIGGDFELIDQNGEIFNSDELKGNLSLIYFGFTSCPDICPTSLNKMTEIVEILNKHKIDILPVFITIDPKRDTPIVLKEYLKHFHPKFIGLTGNEQQIKGVTDKFKVFYARVNGDDDDPNYMLDHSSFTYLIDANGKYLKHFYLDSSPKEIMEFLKGN</sequence>
<feature type="chain" id="PRO_0000280797" description="SCO2-like protein RF_0960">
    <location>
        <begin position="1"/>
        <end position="205"/>
    </location>
</feature>
<feature type="binding site" evidence="1">
    <location>
        <position position="82"/>
    </location>
    <ligand>
        <name>Cu cation</name>
        <dbReference type="ChEBI" id="CHEBI:23378"/>
    </ligand>
</feature>
<feature type="binding site" evidence="1">
    <location>
        <position position="86"/>
    </location>
    <ligand>
        <name>Cu cation</name>
        <dbReference type="ChEBI" id="CHEBI:23378"/>
    </ligand>
</feature>
<feature type="binding site" evidence="1">
    <location>
        <position position="172"/>
    </location>
    <ligand>
        <name>Cu cation</name>
        <dbReference type="ChEBI" id="CHEBI:23378"/>
    </ligand>
</feature>